<dbReference type="EMBL" id="X52115">
    <property type="protein sequence ID" value="CAA36361.1"/>
    <property type="molecule type" value="Genomic_DNA"/>
</dbReference>
<dbReference type="EMBL" id="X74411">
    <property type="protein sequence ID" value="CAE54610.1"/>
    <property type="molecule type" value="Genomic_DNA"/>
</dbReference>
<dbReference type="PIR" id="S10465">
    <property type="entry name" value="PWCK8P"/>
</dbReference>
<dbReference type="RefSeq" id="NP_943648.1">
    <property type="nucleotide sequence ID" value="NC_005253.2"/>
</dbReference>
<dbReference type="SMR" id="P17345"/>
<dbReference type="GeneID" id="2657790"/>
<dbReference type="CGD" id="CAL0000145092">
    <property type="gene designation" value="ATP8"/>
</dbReference>
<dbReference type="GO" id="GO:0031966">
    <property type="term" value="C:mitochondrial membrane"/>
    <property type="evidence" value="ECO:0007669"/>
    <property type="project" value="UniProtKB-SubCell"/>
</dbReference>
<dbReference type="GO" id="GO:0045259">
    <property type="term" value="C:proton-transporting ATP synthase complex"/>
    <property type="evidence" value="ECO:0007669"/>
    <property type="project" value="UniProtKB-KW"/>
</dbReference>
<dbReference type="GO" id="GO:0015078">
    <property type="term" value="F:proton transmembrane transporter activity"/>
    <property type="evidence" value="ECO:0007669"/>
    <property type="project" value="InterPro"/>
</dbReference>
<dbReference type="GO" id="GO:0015986">
    <property type="term" value="P:proton motive force-driven ATP synthesis"/>
    <property type="evidence" value="ECO:0007669"/>
    <property type="project" value="InterPro"/>
</dbReference>
<dbReference type="InterPro" id="IPR009230">
    <property type="entry name" value="ATP_synth_su8_fun"/>
</dbReference>
<dbReference type="Pfam" id="PF05933">
    <property type="entry name" value="Fun_ATP-synt_8"/>
    <property type="match status" value="1"/>
</dbReference>
<keyword id="KW-0066">ATP synthesis</keyword>
<keyword id="KW-0138">CF(0)</keyword>
<keyword id="KW-0375">Hydrogen ion transport</keyword>
<keyword id="KW-0406">Ion transport</keyword>
<keyword id="KW-0472">Membrane</keyword>
<keyword id="KW-0496">Mitochondrion</keyword>
<keyword id="KW-0812">Transmembrane</keyword>
<keyword id="KW-1133">Transmembrane helix</keyword>
<keyword id="KW-0813">Transport</keyword>
<reference key="1">
    <citation type="journal article" date="1990" name="Nucleic Acids Res.">
        <title>Cloning and sequencing of a fragment of the linear mitochondrial DNA of the yeast Candida parapsilosis supporting genes encoding subunit 8 of F0 ATP synthase and a putative t-RNA(Pro).</title>
        <authorList>
            <person name="Guelin E."/>
            <person name="Velours J."/>
            <person name="Guerin M."/>
        </authorList>
    </citation>
    <scope>NUCLEOTIDE SEQUENCE [GENOMIC DNA]</scope>
    <source>
        <strain>CBS 7154 / SP1</strain>
    </source>
</reference>
<reference key="2">
    <citation type="journal article" date="2004" name="Mol. Genet. Genomics">
        <title>Complete DNA sequence of the linear mitochondrial genome of the pathogenic yeast Candida parapsilosis.</title>
        <authorList>
            <person name="Nosek J."/>
            <person name="Novotna M."/>
            <person name="Hlavatovicova Z."/>
            <person name="Ussery D.W."/>
            <person name="Fajkus J."/>
            <person name="Tomaska L."/>
        </authorList>
    </citation>
    <scope>NUCLEOTIDE SEQUENCE [LARGE SCALE GENOMIC DNA]</scope>
    <source>
        <strain>SR23 / CBS 7157</strain>
    </source>
</reference>
<name>ATP8_CANPA</name>
<organism>
    <name type="scientific">Candida parapsilosis</name>
    <name type="common">Yeast</name>
    <dbReference type="NCBI Taxonomy" id="5480"/>
    <lineage>
        <taxon>Eukaryota</taxon>
        <taxon>Fungi</taxon>
        <taxon>Dikarya</taxon>
        <taxon>Ascomycota</taxon>
        <taxon>Saccharomycotina</taxon>
        <taxon>Pichiomycetes</taxon>
        <taxon>Debaryomycetaceae</taxon>
        <taxon>Candida/Lodderomyces clade</taxon>
        <taxon>Candida</taxon>
    </lineage>
</organism>
<sequence length="48" mass="5492">MPQLVPFYFMNLLTGGILAISLLLYFVATYLLPNILRLLIARNIIIKL</sequence>
<proteinExistence type="inferred from homology"/>
<gene>
    <name type="primary">ATP8</name>
    <name type="synonym">AAP1</name>
</gene>
<comment type="function">
    <text evidence="1">Mitochondrial membrane ATP synthase (F(1)F(0) ATP synthase or Complex V) produces ATP from ADP in the presence of a proton gradient across the membrane which is generated by electron transport complexes of the respiratory chain. F-type ATPases consist of two structural domains, F(1) - containing the extramembraneous catalytic core and F(0) - containing the membrane proton channel, linked together by a central stalk and a peripheral stalk. During catalysis, ATP synthesis in the catalytic domain of F(1) is coupled via a rotary mechanism of the central stalk subunits to proton translocation. Part of the complex F(0) domain. Minor subunit located with subunit a in the membrane (By similarity).</text>
</comment>
<comment type="subunit">
    <text evidence="1">F-type ATPases have 2 components, CF(1) - the catalytic core - and CF(0) - the membrane proton channel.</text>
</comment>
<comment type="subcellular location">
    <subcellularLocation>
        <location>Mitochondrion membrane</location>
        <topology>Single-pass membrane protein</topology>
    </subcellularLocation>
</comment>
<comment type="similarity">
    <text evidence="3">Belongs to the ATPase protein 8 family.</text>
</comment>
<evidence type="ECO:0000250" key="1"/>
<evidence type="ECO:0000255" key="2"/>
<evidence type="ECO:0000305" key="3"/>
<accession>P17345</accession>
<geneLocation type="mitochondrion"/>
<feature type="chain" id="PRO_0000195598" description="ATP synthase protein 8">
    <location>
        <begin position="1"/>
        <end position="48"/>
    </location>
</feature>
<feature type="transmembrane region" description="Helical" evidence="2">
    <location>
        <begin position="12"/>
        <end position="32"/>
    </location>
</feature>
<protein>
    <recommendedName>
        <fullName>ATP synthase protein 8</fullName>
    </recommendedName>
    <alternativeName>
        <fullName>A6L</fullName>
    </alternativeName>
    <alternativeName>
        <fullName>F-ATPase subunit 8</fullName>
    </alternativeName>
</protein>